<sequence length="212" mass="24449">MKSNKKILFIGAPGSGKGTISKILVEKYKLVHISTGDLFRKKISEDSQFAAQIQNYLSSGSYVPDEITNKLVADFIKKIPKNQGYILDGYPRTLQQLEFMIKNGINLDCVFYLKIKNETIISRLSQRLFCQKCQKSYNLLLAKPKNELKCDLDSTDLITRNDDRPEIITHRIEKFNNSVIPIVEFFKKSGIIYYLDAEQTLEETVIEIEKWL</sequence>
<feature type="chain" id="PRO_1000021748" description="Adenylate kinase">
    <location>
        <begin position="1"/>
        <end position="212"/>
    </location>
</feature>
<feature type="region of interest" description="NMP" evidence="1">
    <location>
        <begin position="34"/>
        <end position="63"/>
    </location>
</feature>
<feature type="region of interest" description="LID" evidence="1">
    <location>
        <begin position="126"/>
        <end position="163"/>
    </location>
</feature>
<feature type="binding site" evidence="1">
    <location>
        <begin position="14"/>
        <end position="19"/>
    </location>
    <ligand>
        <name>ATP</name>
        <dbReference type="ChEBI" id="CHEBI:30616"/>
    </ligand>
</feature>
<feature type="binding site" evidence="1">
    <location>
        <position position="35"/>
    </location>
    <ligand>
        <name>AMP</name>
        <dbReference type="ChEBI" id="CHEBI:456215"/>
    </ligand>
</feature>
<feature type="binding site" evidence="1">
    <location>
        <position position="40"/>
    </location>
    <ligand>
        <name>AMP</name>
        <dbReference type="ChEBI" id="CHEBI:456215"/>
    </ligand>
</feature>
<feature type="binding site" evidence="1">
    <location>
        <begin position="61"/>
        <end position="63"/>
    </location>
    <ligand>
        <name>AMP</name>
        <dbReference type="ChEBI" id="CHEBI:456215"/>
    </ligand>
</feature>
<feature type="binding site" evidence="1">
    <location>
        <begin position="89"/>
        <end position="92"/>
    </location>
    <ligand>
        <name>AMP</name>
        <dbReference type="ChEBI" id="CHEBI:456215"/>
    </ligand>
</feature>
<feature type="binding site" evidence="1">
    <location>
        <position position="96"/>
    </location>
    <ligand>
        <name>AMP</name>
        <dbReference type="ChEBI" id="CHEBI:456215"/>
    </ligand>
</feature>
<feature type="binding site" evidence="1">
    <location>
        <position position="127"/>
    </location>
    <ligand>
        <name>ATP</name>
        <dbReference type="ChEBI" id="CHEBI:30616"/>
    </ligand>
</feature>
<feature type="binding site" evidence="1">
    <location>
        <position position="130"/>
    </location>
    <ligand>
        <name>Zn(2+)</name>
        <dbReference type="ChEBI" id="CHEBI:29105"/>
        <note>structural</note>
    </ligand>
</feature>
<feature type="binding site" evidence="1">
    <location>
        <position position="133"/>
    </location>
    <ligand>
        <name>Zn(2+)</name>
        <dbReference type="ChEBI" id="CHEBI:29105"/>
        <note>structural</note>
    </ligand>
</feature>
<feature type="binding site" evidence="1">
    <location>
        <begin position="136"/>
        <end position="137"/>
    </location>
    <ligand>
        <name>ATP</name>
        <dbReference type="ChEBI" id="CHEBI:30616"/>
    </ligand>
</feature>
<feature type="binding site" evidence="1">
    <location>
        <position position="150"/>
    </location>
    <ligand>
        <name>Zn(2+)</name>
        <dbReference type="ChEBI" id="CHEBI:29105"/>
        <note>structural</note>
    </ligand>
</feature>
<feature type="binding site" evidence="1">
    <location>
        <position position="153"/>
    </location>
    <ligand>
        <name>Zn(2+)</name>
        <dbReference type="ChEBI" id="CHEBI:29105"/>
        <note>structural</note>
    </ligand>
</feature>
<feature type="binding site" evidence="1">
    <location>
        <position position="160"/>
    </location>
    <ligand>
        <name>AMP</name>
        <dbReference type="ChEBI" id="CHEBI:456215"/>
    </ligand>
</feature>
<feature type="binding site" evidence="1">
    <location>
        <position position="171"/>
    </location>
    <ligand>
        <name>AMP</name>
        <dbReference type="ChEBI" id="CHEBI:456215"/>
    </ligand>
</feature>
<feature type="binding site" evidence="1">
    <location>
        <position position="199"/>
    </location>
    <ligand>
        <name>ATP</name>
        <dbReference type="ChEBI" id="CHEBI:30616"/>
    </ligand>
</feature>
<accession>Q4AAG0</accession>
<reference key="1">
    <citation type="journal article" date="2005" name="J. Bacteriol.">
        <title>Swine and poultry pathogens: the complete genome sequences of two strains of Mycoplasma hyopneumoniae and a strain of Mycoplasma synoviae.</title>
        <authorList>
            <person name="Vasconcelos A.T.R."/>
            <person name="Ferreira H.B."/>
            <person name="Bizarro C.V."/>
            <person name="Bonatto S.L."/>
            <person name="Carvalho M.O."/>
            <person name="Pinto P.M."/>
            <person name="Almeida D.F."/>
            <person name="Almeida L.G.P."/>
            <person name="Almeida R."/>
            <person name="Alves-Junior L."/>
            <person name="Assuncao E.N."/>
            <person name="Azevedo V.A.C."/>
            <person name="Bogo M.R."/>
            <person name="Brigido M.M."/>
            <person name="Brocchi M."/>
            <person name="Burity H.A."/>
            <person name="Camargo A.A."/>
            <person name="Camargo S.S."/>
            <person name="Carepo M.S."/>
            <person name="Carraro D.M."/>
            <person name="de Mattos Cascardo J.C."/>
            <person name="Castro L.A."/>
            <person name="Cavalcanti G."/>
            <person name="Chemale G."/>
            <person name="Collevatti R.G."/>
            <person name="Cunha C.W."/>
            <person name="Dallagiovanna B."/>
            <person name="Dambros B.P."/>
            <person name="Dellagostin O.A."/>
            <person name="Falcao C."/>
            <person name="Fantinatti-Garboggini F."/>
            <person name="Felipe M.S.S."/>
            <person name="Fiorentin L."/>
            <person name="Franco G.R."/>
            <person name="Freitas N.S.A."/>
            <person name="Frias D."/>
            <person name="Grangeiro T.B."/>
            <person name="Grisard E.C."/>
            <person name="Guimaraes C.T."/>
            <person name="Hungria M."/>
            <person name="Jardim S.N."/>
            <person name="Krieger M.A."/>
            <person name="Laurino J.P."/>
            <person name="Lima L.F.A."/>
            <person name="Lopes M.I."/>
            <person name="Loreto E.L.S."/>
            <person name="Madeira H.M.F."/>
            <person name="Manfio G.P."/>
            <person name="Maranhao A.Q."/>
            <person name="Martinkovics C.T."/>
            <person name="Medeiros S.R.B."/>
            <person name="Moreira M.A.M."/>
            <person name="Neiva M."/>
            <person name="Ramalho-Neto C.E."/>
            <person name="Nicolas M.F."/>
            <person name="Oliveira S.C."/>
            <person name="Paixao R.F.C."/>
            <person name="Pedrosa F.O."/>
            <person name="Pena S.D.J."/>
            <person name="Pereira M."/>
            <person name="Pereira-Ferrari L."/>
            <person name="Piffer I."/>
            <person name="Pinto L.S."/>
            <person name="Potrich D.P."/>
            <person name="Salim A.C.M."/>
            <person name="Santos F.R."/>
            <person name="Schmitt R."/>
            <person name="Schneider M.P.C."/>
            <person name="Schrank A."/>
            <person name="Schrank I.S."/>
            <person name="Schuck A.F."/>
            <person name="Seuanez H.N."/>
            <person name="Silva D.W."/>
            <person name="Silva R."/>
            <person name="Silva S.C."/>
            <person name="Soares C.M.A."/>
            <person name="Souza K.R.L."/>
            <person name="Souza R.C."/>
            <person name="Staats C.C."/>
            <person name="Steffens M.B.R."/>
            <person name="Teixeira S.M.R."/>
            <person name="Urmenyi T.P."/>
            <person name="Vainstein M.H."/>
            <person name="Zuccherato L.W."/>
            <person name="Simpson A.J.G."/>
            <person name="Zaha A."/>
        </authorList>
    </citation>
    <scope>NUCLEOTIDE SEQUENCE [LARGE SCALE GENOMIC DNA]</scope>
    <source>
        <strain>J / ATCC 25934 / NCTC 10110</strain>
    </source>
</reference>
<comment type="function">
    <text evidence="1">Catalyzes the reversible transfer of the terminal phosphate group between ATP and AMP. Plays an important role in cellular energy homeostasis and in adenine nucleotide metabolism.</text>
</comment>
<comment type="catalytic activity">
    <reaction evidence="1">
        <text>AMP + ATP = 2 ADP</text>
        <dbReference type="Rhea" id="RHEA:12973"/>
        <dbReference type="ChEBI" id="CHEBI:30616"/>
        <dbReference type="ChEBI" id="CHEBI:456215"/>
        <dbReference type="ChEBI" id="CHEBI:456216"/>
        <dbReference type="EC" id="2.7.4.3"/>
    </reaction>
</comment>
<comment type="pathway">
    <text evidence="1">Purine metabolism; AMP biosynthesis via salvage pathway; AMP from ADP: step 1/1.</text>
</comment>
<comment type="subunit">
    <text evidence="1">Monomer.</text>
</comment>
<comment type="subcellular location">
    <subcellularLocation>
        <location evidence="1">Cytoplasm</location>
    </subcellularLocation>
</comment>
<comment type="domain">
    <text evidence="1">Consists of three domains, a large central CORE domain and two small peripheral domains, NMPbind and LID, which undergo movements during catalysis. The LID domain closes over the site of phosphoryl transfer upon ATP binding. Assembling and dissambling the active center during each catalytic cycle provides an effective means to prevent ATP hydrolysis. Some bacteria have evolved a zinc-coordinating structure that stabilizes the LID domain.</text>
</comment>
<comment type="similarity">
    <text evidence="1">Belongs to the adenylate kinase family.</text>
</comment>
<name>KAD_MESHJ</name>
<keyword id="KW-0067">ATP-binding</keyword>
<keyword id="KW-0963">Cytoplasm</keyword>
<keyword id="KW-0418">Kinase</keyword>
<keyword id="KW-0479">Metal-binding</keyword>
<keyword id="KW-0545">Nucleotide biosynthesis</keyword>
<keyword id="KW-0547">Nucleotide-binding</keyword>
<keyword id="KW-0808">Transferase</keyword>
<keyword id="KW-0862">Zinc</keyword>
<evidence type="ECO:0000255" key="1">
    <source>
        <dbReference type="HAMAP-Rule" id="MF_00235"/>
    </source>
</evidence>
<gene>
    <name evidence="1" type="primary">adk</name>
    <name type="ordered locus">MHJ_0170</name>
</gene>
<dbReference type="EC" id="2.7.4.3" evidence="1"/>
<dbReference type="EMBL" id="AE017243">
    <property type="protein sequence ID" value="AAZ44261.1"/>
    <property type="molecule type" value="Genomic_DNA"/>
</dbReference>
<dbReference type="RefSeq" id="WP_011283965.1">
    <property type="nucleotide sequence ID" value="NC_007295.1"/>
</dbReference>
<dbReference type="SMR" id="Q4AAG0"/>
<dbReference type="GeneID" id="41334473"/>
<dbReference type="KEGG" id="mhj:MHJ_0170"/>
<dbReference type="eggNOG" id="COG0563">
    <property type="taxonomic scope" value="Bacteria"/>
</dbReference>
<dbReference type="HOGENOM" id="CLU_032354_1_2_14"/>
<dbReference type="OrthoDB" id="9805030at2"/>
<dbReference type="UniPathway" id="UPA00588">
    <property type="reaction ID" value="UER00649"/>
</dbReference>
<dbReference type="Proteomes" id="UP000000548">
    <property type="component" value="Chromosome"/>
</dbReference>
<dbReference type="GO" id="GO:0005737">
    <property type="term" value="C:cytoplasm"/>
    <property type="evidence" value="ECO:0007669"/>
    <property type="project" value="UniProtKB-SubCell"/>
</dbReference>
<dbReference type="GO" id="GO:0004017">
    <property type="term" value="F:adenylate kinase activity"/>
    <property type="evidence" value="ECO:0007669"/>
    <property type="project" value="UniProtKB-UniRule"/>
</dbReference>
<dbReference type="GO" id="GO:0005524">
    <property type="term" value="F:ATP binding"/>
    <property type="evidence" value="ECO:0007669"/>
    <property type="project" value="UniProtKB-UniRule"/>
</dbReference>
<dbReference type="GO" id="GO:0008270">
    <property type="term" value="F:zinc ion binding"/>
    <property type="evidence" value="ECO:0007669"/>
    <property type="project" value="UniProtKB-UniRule"/>
</dbReference>
<dbReference type="GO" id="GO:0044209">
    <property type="term" value="P:AMP salvage"/>
    <property type="evidence" value="ECO:0007669"/>
    <property type="project" value="UniProtKB-UniRule"/>
</dbReference>
<dbReference type="CDD" id="cd01428">
    <property type="entry name" value="ADK"/>
    <property type="match status" value="1"/>
</dbReference>
<dbReference type="Gene3D" id="3.40.50.300">
    <property type="entry name" value="P-loop containing nucleotide triphosphate hydrolases"/>
    <property type="match status" value="1"/>
</dbReference>
<dbReference type="HAMAP" id="MF_00235">
    <property type="entry name" value="Adenylate_kinase_Adk"/>
    <property type="match status" value="1"/>
</dbReference>
<dbReference type="InterPro" id="IPR006259">
    <property type="entry name" value="Adenyl_kin_sub"/>
</dbReference>
<dbReference type="InterPro" id="IPR000850">
    <property type="entry name" value="Adenylat/UMP-CMP_kin"/>
</dbReference>
<dbReference type="InterPro" id="IPR033690">
    <property type="entry name" value="Adenylat_kinase_CS"/>
</dbReference>
<dbReference type="InterPro" id="IPR007862">
    <property type="entry name" value="Adenylate_kinase_lid-dom"/>
</dbReference>
<dbReference type="InterPro" id="IPR036193">
    <property type="entry name" value="ADK_active_lid_dom_sf"/>
</dbReference>
<dbReference type="InterPro" id="IPR027417">
    <property type="entry name" value="P-loop_NTPase"/>
</dbReference>
<dbReference type="NCBIfam" id="TIGR01351">
    <property type="entry name" value="adk"/>
    <property type="match status" value="1"/>
</dbReference>
<dbReference type="PANTHER" id="PTHR23359">
    <property type="entry name" value="NUCLEOTIDE KINASE"/>
    <property type="match status" value="1"/>
</dbReference>
<dbReference type="Pfam" id="PF00406">
    <property type="entry name" value="ADK"/>
    <property type="match status" value="1"/>
</dbReference>
<dbReference type="Pfam" id="PF05191">
    <property type="entry name" value="ADK_lid"/>
    <property type="match status" value="1"/>
</dbReference>
<dbReference type="PRINTS" id="PR00094">
    <property type="entry name" value="ADENYLTKNASE"/>
</dbReference>
<dbReference type="SUPFAM" id="SSF57774">
    <property type="entry name" value="Microbial and mitochondrial ADK, insert 'zinc finger' domain"/>
    <property type="match status" value="1"/>
</dbReference>
<dbReference type="SUPFAM" id="SSF52540">
    <property type="entry name" value="P-loop containing nucleoside triphosphate hydrolases"/>
    <property type="match status" value="1"/>
</dbReference>
<dbReference type="PROSITE" id="PS00113">
    <property type="entry name" value="ADENYLATE_KINASE"/>
    <property type="match status" value="1"/>
</dbReference>
<protein>
    <recommendedName>
        <fullName evidence="1">Adenylate kinase</fullName>
        <shortName evidence="1">AK</shortName>
        <ecNumber evidence="1">2.7.4.3</ecNumber>
    </recommendedName>
    <alternativeName>
        <fullName evidence="1">ATP-AMP transphosphorylase</fullName>
    </alternativeName>
    <alternativeName>
        <fullName evidence="1">ATP:AMP phosphotransferase</fullName>
    </alternativeName>
    <alternativeName>
        <fullName evidence="1">Adenylate monophosphate kinase</fullName>
    </alternativeName>
</protein>
<organism>
    <name type="scientific">Mesomycoplasma hyopneumoniae (strain J / ATCC 25934 / NCTC 10110)</name>
    <name type="common">Mycoplasma hyopneumoniae</name>
    <dbReference type="NCBI Taxonomy" id="262719"/>
    <lineage>
        <taxon>Bacteria</taxon>
        <taxon>Bacillati</taxon>
        <taxon>Mycoplasmatota</taxon>
        <taxon>Mycoplasmoidales</taxon>
        <taxon>Metamycoplasmataceae</taxon>
        <taxon>Mesomycoplasma</taxon>
    </lineage>
</organism>
<proteinExistence type="inferred from homology"/>